<feature type="chain" id="PRO_0000389519" description="Allatostatin-A receptor">
    <location>
        <begin position="1"/>
        <end position="361"/>
    </location>
</feature>
<feature type="topological domain" description="Extracellular" evidence="1">
    <location>
        <begin position="1"/>
        <end position="46"/>
    </location>
</feature>
<feature type="transmembrane region" description="Helical; Name=1" evidence="1">
    <location>
        <begin position="47"/>
        <end position="67"/>
    </location>
</feature>
<feature type="topological domain" description="Cytoplasmic" evidence="1">
    <location>
        <begin position="68"/>
        <end position="78"/>
    </location>
</feature>
<feature type="transmembrane region" description="Helical; Name=2" evidence="1">
    <location>
        <begin position="79"/>
        <end position="99"/>
    </location>
</feature>
<feature type="topological domain" description="Extracellular" evidence="1">
    <location>
        <begin position="100"/>
        <end position="116"/>
    </location>
</feature>
<feature type="transmembrane region" description="Helical; Name=3" evidence="1">
    <location>
        <begin position="117"/>
        <end position="137"/>
    </location>
</feature>
<feature type="topological domain" description="Cytoplasmic" evidence="1">
    <location>
        <begin position="138"/>
        <end position="158"/>
    </location>
</feature>
<feature type="transmembrane region" description="Helical; Name=4" evidence="1">
    <location>
        <begin position="159"/>
        <end position="179"/>
    </location>
</feature>
<feature type="topological domain" description="Extracellular" evidence="1">
    <location>
        <begin position="180"/>
        <end position="212"/>
    </location>
</feature>
<feature type="transmembrane region" description="Helical; Name=5" evidence="1">
    <location>
        <begin position="213"/>
        <end position="233"/>
    </location>
</feature>
<feature type="topological domain" description="Cytoplasmic" evidence="1">
    <location>
        <begin position="234"/>
        <end position="259"/>
    </location>
</feature>
<feature type="transmembrane region" description="Helical; Name=6" evidence="1">
    <location>
        <begin position="260"/>
        <end position="280"/>
    </location>
</feature>
<feature type="topological domain" description="Extracellular" evidence="1">
    <location>
        <begin position="281"/>
        <end position="296"/>
    </location>
</feature>
<feature type="transmembrane region" description="Helical; Name=7" evidence="1">
    <location>
        <begin position="297"/>
        <end position="317"/>
    </location>
</feature>
<feature type="topological domain" description="Cytoplasmic" evidence="1">
    <location>
        <begin position="318"/>
        <end position="361"/>
    </location>
</feature>
<feature type="region of interest" description="Disordered" evidence="3">
    <location>
        <begin position="341"/>
        <end position="361"/>
    </location>
</feature>
<feature type="compositionally biased region" description="Polar residues" evidence="3">
    <location>
        <begin position="343"/>
        <end position="361"/>
    </location>
</feature>
<feature type="glycosylation site" description="N-linked (GlcNAc...) asparagine" evidence="1">
    <location>
        <position position="14"/>
    </location>
</feature>
<feature type="glycosylation site" description="N-linked (GlcNAc...) asparagine" evidence="1">
    <location>
        <position position="26"/>
    </location>
</feature>
<feature type="glycosylation site" description="N-linked (GlcNAc...) asparagine" evidence="1">
    <location>
        <position position="192"/>
    </location>
</feature>
<feature type="disulfide bond" evidence="2">
    <location>
        <begin position="115"/>
        <end position="196"/>
    </location>
</feature>
<evidence type="ECO:0000255" key="1"/>
<evidence type="ECO:0000255" key="2">
    <source>
        <dbReference type="PROSITE-ProRule" id="PRU00521"/>
    </source>
</evidence>
<evidence type="ECO:0000256" key="3">
    <source>
        <dbReference type="SAM" id="MobiDB-lite"/>
    </source>
</evidence>
<evidence type="ECO:0000269" key="4">
    <source>
    </source>
</evidence>
<evidence type="ECO:0000269" key="5">
    <source>
    </source>
</evidence>
<evidence type="ECO:0000303" key="6">
    <source>
    </source>
</evidence>
<evidence type="ECO:0000305" key="7"/>
<evidence type="ECO:0000312" key="8">
    <source>
        <dbReference type="EMBL" id="AAG44631.1"/>
    </source>
</evidence>
<protein>
    <recommendedName>
        <fullName>Allatostatin-A receptor</fullName>
        <shortName evidence="6">BAR</shortName>
    </recommendedName>
</protein>
<name>AR_BOMMO</name>
<sequence>MESTEDEFYTICLNLTAEDPSFGNCNYTTDFENGELLEKVVSRVVPIFFGFIGIVGLVGNALVVLVVAANPGMRSTTNLLIINLAVADLLFVIFCVPFTATDYVMPRWPFGDWWCKVVQYFIVVTAHASVYTLVLMSLDRFMAVVHPIASMSIRTEKNALLAIACIWVVILTTAIPVGICHGEREYSYFNRNHSSCVFLEERGYSKLGFQMSFFLSSYVIPLALISVLYMCMLTRLWKSAPGGRVSAESRRGRKKVTRMVVVVVVVFAVCWCPIQIILLVKALNKYHITYFTVTAQIVSHVLAYMNSCVNPVLYAFLSENFRVAFRKVMYCPPPYNDGFSGRPQATKTTRTGNGNSCHDIV</sequence>
<accession>Q8WPA2</accession>
<proteinExistence type="evidence at transcript level"/>
<gene>
    <name evidence="6" type="primary">AR</name>
</gene>
<keyword id="KW-1003">Cell membrane</keyword>
<keyword id="KW-1015">Disulfide bond</keyword>
<keyword id="KW-0297">G-protein coupled receptor</keyword>
<keyword id="KW-0325">Glycoprotein</keyword>
<keyword id="KW-0472">Membrane</keyword>
<keyword id="KW-0675">Receptor</keyword>
<keyword id="KW-1185">Reference proteome</keyword>
<keyword id="KW-0807">Transducer</keyword>
<keyword id="KW-0812">Transmembrane</keyword>
<keyword id="KW-1133">Transmembrane helix</keyword>
<reference evidence="7 8" key="1">
    <citation type="journal article" date="2001" name="J. Biol. Chem.">
        <title>Molecular cloning of a functional allatostatin gut/brain receptor and an allatostatin preprohormone from the silkworm Bombyx mori.</title>
        <authorList>
            <person name="Secher T."/>
            <person name="Lenz C."/>
            <person name="Cazzamali G."/>
            <person name="Sorensen G."/>
            <person name="Williamson M."/>
            <person name="Hansen G.N."/>
            <person name="Svane P."/>
            <person name="Grimmelikhuijzen C.J.P."/>
        </authorList>
    </citation>
    <scope>NUCLEOTIDE SEQUENCE [GENOMIC DNA / MRNA]</scope>
    <scope>FUNCTION</scope>
    <scope>TISSUE SPECIFICITY</scope>
    <source>
        <strain evidence="8">Lyon 200 BA x Lyon 300 AB</strain>
        <tissue evidence="4">Fifth instar larvae</tissue>
    </source>
</reference>
<reference evidence="7" key="2">
    <citation type="journal article" date="2008" name="PLoS ONE">
        <title>Neuropeptide receptor transcriptome reveals unidentified neuroendocrine pathways.</title>
        <authorList>
            <person name="Yamanaka N."/>
            <person name="Yamamoto S."/>
            <person name="Zitnan D."/>
            <person name="Watanabe K."/>
            <person name="Kawada T."/>
            <person name="Satake H."/>
            <person name="Kaneko Y."/>
            <person name="Hiruma K."/>
            <person name="Tanaka Y."/>
            <person name="Shinoda T."/>
            <person name="Kataoka H."/>
        </authorList>
    </citation>
    <scope>TISSUE SPECIFICITY</scope>
</reference>
<comment type="function">
    <text evidence="4">Acts as a receptor for A-type allatostatin neuropeptide hormones.</text>
</comment>
<comment type="subcellular location">
    <subcellularLocation>
        <location evidence="7">Cell membrane</location>
        <topology evidence="7">Multi-pass membrane protein</topology>
    </subcellularLocation>
</comment>
<comment type="tissue specificity">
    <text evidence="4 5">Expressed in the midgut and, to a lesser extent, in the fore- and hindgut of fifth instar larvae. Also highly expressed in the brain of fourth and fifth instar larvae.</text>
</comment>
<comment type="similarity">
    <text evidence="2">Belongs to the G-protein coupled receptor 1 family.</text>
</comment>
<organism>
    <name type="scientific">Bombyx mori</name>
    <name type="common">Silk moth</name>
    <dbReference type="NCBI Taxonomy" id="7091"/>
    <lineage>
        <taxon>Eukaryota</taxon>
        <taxon>Metazoa</taxon>
        <taxon>Ecdysozoa</taxon>
        <taxon>Arthropoda</taxon>
        <taxon>Hexapoda</taxon>
        <taxon>Insecta</taxon>
        <taxon>Pterygota</taxon>
        <taxon>Neoptera</taxon>
        <taxon>Endopterygota</taxon>
        <taxon>Lepidoptera</taxon>
        <taxon>Glossata</taxon>
        <taxon>Ditrysia</taxon>
        <taxon>Bombycoidea</taxon>
        <taxon>Bombycidae</taxon>
        <taxon>Bombycinae</taxon>
        <taxon>Bombyx</taxon>
    </lineage>
</organism>
<dbReference type="EMBL" id="AF254742">
    <property type="protein sequence ID" value="AAG44631.1"/>
    <property type="molecule type" value="mRNA"/>
</dbReference>
<dbReference type="EMBL" id="AF303370">
    <property type="protein sequence ID" value="AAL47056.1"/>
    <property type="molecule type" value="Genomic_DNA"/>
</dbReference>
<dbReference type="EMBL" id="AF303368">
    <property type="protein sequence ID" value="AAL47056.1"/>
    <property type="status" value="JOINED"/>
    <property type="molecule type" value="Genomic_DNA"/>
</dbReference>
<dbReference type="EMBL" id="AF303369">
    <property type="protein sequence ID" value="AAL47056.1"/>
    <property type="status" value="JOINED"/>
    <property type="molecule type" value="Genomic_DNA"/>
</dbReference>
<dbReference type="RefSeq" id="NP_001037035.1">
    <property type="nucleotide sequence ID" value="NM_001043570.1"/>
</dbReference>
<dbReference type="RefSeq" id="XP_012546689.1">
    <property type="nucleotide sequence ID" value="XM_012691235.1"/>
</dbReference>
<dbReference type="RefSeq" id="XP_012546690.1">
    <property type="nucleotide sequence ID" value="XM_012691236.1"/>
</dbReference>
<dbReference type="SMR" id="Q8WPA2"/>
<dbReference type="FunCoup" id="Q8WPA2">
    <property type="interactions" value="133"/>
</dbReference>
<dbReference type="STRING" id="7091.Q8WPA2"/>
<dbReference type="GlyCosmos" id="Q8WPA2">
    <property type="glycosylation" value="3 sites, No reported glycans"/>
</dbReference>
<dbReference type="PaxDb" id="7091-BGIBMGA005708-TA"/>
<dbReference type="EnsemblMetazoa" id="NM_001043570.1">
    <property type="protein sequence ID" value="NP_001037035.1"/>
    <property type="gene ID" value="GeneID_692587"/>
</dbReference>
<dbReference type="EnsemblMetazoa" id="XM_012691236.3">
    <property type="protein sequence ID" value="XP_012546690.1"/>
    <property type="gene ID" value="GeneID_692587"/>
</dbReference>
<dbReference type="GeneID" id="692587"/>
<dbReference type="KEGG" id="bmor:692587"/>
<dbReference type="CTD" id="44126"/>
<dbReference type="eggNOG" id="KOG3656">
    <property type="taxonomic scope" value="Eukaryota"/>
</dbReference>
<dbReference type="HOGENOM" id="CLU_009579_6_4_1"/>
<dbReference type="InParanoid" id="Q8WPA2"/>
<dbReference type="OrthoDB" id="352343at7088"/>
<dbReference type="Proteomes" id="UP000005204">
    <property type="component" value="Unassembled WGS sequence"/>
</dbReference>
<dbReference type="GO" id="GO:0005886">
    <property type="term" value="C:plasma membrane"/>
    <property type="evidence" value="ECO:0007669"/>
    <property type="project" value="UniProtKB-SubCell"/>
</dbReference>
<dbReference type="GO" id="GO:0004930">
    <property type="term" value="F:G protein-coupled receptor activity"/>
    <property type="evidence" value="ECO:0007669"/>
    <property type="project" value="UniProtKB-KW"/>
</dbReference>
<dbReference type="GO" id="GO:0042562">
    <property type="term" value="F:hormone binding"/>
    <property type="evidence" value="ECO:0000314"/>
    <property type="project" value="UniProtKB"/>
</dbReference>
<dbReference type="GO" id="GO:0042923">
    <property type="term" value="F:neuropeptide binding"/>
    <property type="evidence" value="ECO:0000314"/>
    <property type="project" value="UniProtKB"/>
</dbReference>
<dbReference type="CDD" id="cd15096">
    <property type="entry name" value="7tmA_AstA_R_insect"/>
    <property type="match status" value="1"/>
</dbReference>
<dbReference type="FunFam" id="1.20.1070.10:FF:000255">
    <property type="entry name" value="Allatostatin A receptor"/>
    <property type="match status" value="1"/>
</dbReference>
<dbReference type="Gene3D" id="1.20.1070.10">
    <property type="entry name" value="Rhodopsin 7-helix transmembrane proteins"/>
    <property type="match status" value="1"/>
</dbReference>
<dbReference type="InterPro" id="IPR000405">
    <property type="entry name" value="Galanin_rcpt"/>
</dbReference>
<dbReference type="InterPro" id="IPR000276">
    <property type="entry name" value="GPCR_Rhodpsn"/>
</dbReference>
<dbReference type="InterPro" id="IPR017452">
    <property type="entry name" value="GPCR_Rhodpsn_7TM"/>
</dbReference>
<dbReference type="PANTHER" id="PTHR45695:SF23">
    <property type="entry name" value="GALANIN-LIKE G-PROTEIN COUPLED RECEPTOR NPR-9"/>
    <property type="match status" value="1"/>
</dbReference>
<dbReference type="PANTHER" id="PTHR45695">
    <property type="entry name" value="LEUCOKININ RECEPTOR-RELATED"/>
    <property type="match status" value="1"/>
</dbReference>
<dbReference type="Pfam" id="PF00001">
    <property type="entry name" value="7tm_1"/>
    <property type="match status" value="1"/>
</dbReference>
<dbReference type="PRINTS" id="PR00663">
    <property type="entry name" value="GALANINR"/>
</dbReference>
<dbReference type="PRINTS" id="PR00237">
    <property type="entry name" value="GPCRRHODOPSN"/>
</dbReference>
<dbReference type="SMART" id="SM01381">
    <property type="entry name" value="7TM_GPCR_Srsx"/>
    <property type="match status" value="1"/>
</dbReference>
<dbReference type="SUPFAM" id="SSF81321">
    <property type="entry name" value="Family A G protein-coupled receptor-like"/>
    <property type="match status" value="1"/>
</dbReference>
<dbReference type="PROSITE" id="PS00237">
    <property type="entry name" value="G_PROTEIN_RECEP_F1_1"/>
    <property type="match status" value="1"/>
</dbReference>
<dbReference type="PROSITE" id="PS50262">
    <property type="entry name" value="G_PROTEIN_RECEP_F1_2"/>
    <property type="match status" value="1"/>
</dbReference>